<comment type="function">
    <text evidence="1">Part of the ABC transporter complex BtuCDF involved in vitamin B12 import. Responsible for energy coupling to the transport system.</text>
</comment>
<comment type="catalytic activity">
    <reaction evidence="1">
        <text>an R-cob(III)alamin(out) + ATP + H2O = an R-cob(III)alamin(in) + ADP + phosphate + H(+)</text>
        <dbReference type="Rhea" id="RHEA:17873"/>
        <dbReference type="ChEBI" id="CHEBI:15377"/>
        <dbReference type="ChEBI" id="CHEBI:15378"/>
        <dbReference type="ChEBI" id="CHEBI:30616"/>
        <dbReference type="ChEBI" id="CHEBI:43474"/>
        <dbReference type="ChEBI" id="CHEBI:140785"/>
        <dbReference type="ChEBI" id="CHEBI:456216"/>
        <dbReference type="EC" id="7.6.2.8"/>
    </reaction>
</comment>
<comment type="subunit">
    <text evidence="1">The complex is composed of two ATP-binding proteins (BtuD), two transmembrane proteins (BtuC) and a solute-binding protein (BtuF).</text>
</comment>
<comment type="subcellular location">
    <subcellularLocation>
        <location evidence="1">Cell inner membrane</location>
        <topology evidence="1">Peripheral membrane protein</topology>
    </subcellularLocation>
</comment>
<comment type="similarity">
    <text evidence="1">Belongs to the ABC transporter superfamily. Vitamin B12 importer (TC 3.A.1.13.1) family.</text>
</comment>
<proteinExistence type="inferred from homology"/>
<feature type="chain" id="PRO_1000083967" description="Vitamin B12 import ATP-binding protein BtuD">
    <location>
        <begin position="1"/>
        <end position="249"/>
    </location>
</feature>
<feature type="domain" description="ABC transporter" evidence="1">
    <location>
        <begin position="1"/>
        <end position="233"/>
    </location>
</feature>
<feature type="binding site" evidence="1">
    <location>
        <begin position="33"/>
        <end position="40"/>
    </location>
    <ligand>
        <name>ATP</name>
        <dbReference type="ChEBI" id="CHEBI:30616"/>
    </ligand>
</feature>
<dbReference type="EC" id="7.6.2.8" evidence="1"/>
<dbReference type="EMBL" id="CP000266">
    <property type="protein sequence ID" value="ABF03696.1"/>
    <property type="molecule type" value="Genomic_DNA"/>
</dbReference>
<dbReference type="RefSeq" id="WP_000029466.1">
    <property type="nucleotide sequence ID" value="NC_008258.1"/>
</dbReference>
<dbReference type="SMR" id="Q0T4R9"/>
<dbReference type="GeneID" id="93775873"/>
<dbReference type="KEGG" id="sfv:SFV_1514"/>
<dbReference type="HOGENOM" id="CLU_000604_1_11_6"/>
<dbReference type="Proteomes" id="UP000000659">
    <property type="component" value="Chromosome"/>
</dbReference>
<dbReference type="GO" id="GO:0005886">
    <property type="term" value="C:plasma membrane"/>
    <property type="evidence" value="ECO:0007669"/>
    <property type="project" value="UniProtKB-SubCell"/>
</dbReference>
<dbReference type="GO" id="GO:0015420">
    <property type="term" value="F:ABC-type vitamin B12 transporter activity"/>
    <property type="evidence" value="ECO:0007669"/>
    <property type="project" value="UniProtKB-UniRule"/>
</dbReference>
<dbReference type="GO" id="GO:0005524">
    <property type="term" value="F:ATP binding"/>
    <property type="evidence" value="ECO:0007669"/>
    <property type="project" value="UniProtKB-KW"/>
</dbReference>
<dbReference type="GO" id="GO:0016887">
    <property type="term" value="F:ATP hydrolysis activity"/>
    <property type="evidence" value="ECO:0007669"/>
    <property type="project" value="InterPro"/>
</dbReference>
<dbReference type="CDD" id="cd03214">
    <property type="entry name" value="ABC_Iron-Siderophores_B12_Hemin"/>
    <property type="match status" value="1"/>
</dbReference>
<dbReference type="FunFam" id="3.40.50.300:FF:000462">
    <property type="entry name" value="Vitamin B12 import ATP-binding protein BtuD"/>
    <property type="match status" value="1"/>
</dbReference>
<dbReference type="Gene3D" id="3.40.50.300">
    <property type="entry name" value="P-loop containing nucleotide triphosphate hydrolases"/>
    <property type="match status" value="1"/>
</dbReference>
<dbReference type="HAMAP" id="MF_01005">
    <property type="entry name" value="BtuD"/>
    <property type="match status" value="1"/>
</dbReference>
<dbReference type="InterPro" id="IPR003593">
    <property type="entry name" value="AAA+_ATPase"/>
</dbReference>
<dbReference type="InterPro" id="IPR003439">
    <property type="entry name" value="ABC_transporter-like_ATP-bd"/>
</dbReference>
<dbReference type="InterPro" id="IPR017871">
    <property type="entry name" value="ABC_transporter-like_CS"/>
</dbReference>
<dbReference type="InterPro" id="IPR023693">
    <property type="entry name" value="ABC_transptr_BtuD"/>
</dbReference>
<dbReference type="InterPro" id="IPR050153">
    <property type="entry name" value="Metal_Ion_Import_ABC"/>
</dbReference>
<dbReference type="InterPro" id="IPR027417">
    <property type="entry name" value="P-loop_NTPase"/>
</dbReference>
<dbReference type="NCBIfam" id="NF002981">
    <property type="entry name" value="PRK03695.1"/>
    <property type="match status" value="1"/>
</dbReference>
<dbReference type="PANTHER" id="PTHR42734">
    <property type="entry name" value="METAL TRANSPORT SYSTEM ATP-BINDING PROTEIN TM_0124-RELATED"/>
    <property type="match status" value="1"/>
</dbReference>
<dbReference type="PANTHER" id="PTHR42734:SF18">
    <property type="entry name" value="VITAMIN B12 IMPORT ATP-BINDING PROTEIN BTUD"/>
    <property type="match status" value="1"/>
</dbReference>
<dbReference type="Pfam" id="PF00005">
    <property type="entry name" value="ABC_tran"/>
    <property type="match status" value="1"/>
</dbReference>
<dbReference type="SMART" id="SM00382">
    <property type="entry name" value="AAA"/>
    <property type="match status" value="1"/>
</dbReference>
<dbReference type="SUPFAM" id="SSF52540">
    <property type="entry name" value="P-loop containing nucleoside triphosphate hydrolases"/>
    <property type="match status" value="1"/>
</dbReference>
<dbReference type="PROSITE" id="PS00211">
    <property type="entry name" value="ABC_TRANSPORTER_1"/>
    <property type="match status" value="1"/>
</dbReference>
<dbReference type="PROSITE" id="PS50893">
    <property type="entry name" value="ABC_TRANSPORTER_2"/>
    <property type="match status" value="1"/>
</dbReference>
<evidence type="ECO:0000255" key="1">
    <source>
        <dbReference type="HAMAP-Rule" id="MF_01005"/>
    </source>
</evidence>
<protein>
    <recommendedName>
        <fullName evidence="1">Vitamin B12 import ATP-binding protein BtuD</fullName>
        <ecNumber evidence="1">7.6.2.8</ecNumber>
    </recommendedName>
    <alternativeName>
        <fullName evidence="1">Vitamin B12-transporting ATPase</fullName>
    </alternativeName>
</protein>
<sequence>MSIVMQLQDVAESTRLGPLSGEVRAGEILHLVGPNGAGKSTLLARMAGMTSGKGSIQFAGQPLEAWSATKLALHRAYLSQQQTPPFAMPVWHYLTLHQHDKTRTELLNDVAGALALDDKLGRSTNQLSGGEWQRVRLAAVVLQITPQANPAGQLLLLDEPMNSLDVAQQSALDKILSALCQQGLAIVMSSHDLNHTLRHAHRAWLLKGGKMLASGRREEVLTPPNLAQAYGMNFRRLDIEGHRMLISTI</sequence>
<accession>Q0T4R9</accession>
<gene>
    <name evidence="1" type="primary">btuD</name>
    <name type="ordered locus">SFV_1514</name>
</gene>
<organism>
    <name type="scientific">Shigella flexneri serotype 5b (strain 8401)</name>
    <dbReference type="NCBI Taxonomy" id="373384"/>
    <lineage>
        <taxon>Bacteria</taxon>
        <taxon>Pseudomonadati</taxon>
        <taxon>Pseudomonadota</taxon>
        <taxon>Gammaproteobacteria</taxon>
        <taxon>Enterobacterales</taxon>
        <taxon>Enterobacteriaceae</taxon>
        <taxon>Shigella</taxon>
    </lineage>
</organism>
<reference key="1">
    <citation type="journal article" date="2006" name="BMC Genomics">
        <title>Complete genome sequence of Shigella flexneri 5b and comparison with Shigella flexneri 2a.</title>
        <authorList>
            <person name="Nie H."/>
            <person name="Yang F."/>
            <person name="Zhang X."/>
            <person name="Yang J."/>
            <person name="Chen L."/>
            <person name="Wang J."/>
            <person name="Xiong Z."/>
            <person name="Peng J."/>
            <person name="Sun L."/>
            <person name="Dong J."/>
            <person name="Xue Y."/>
            <person name="Xu X."/>
            <person name="Chen S."/>
            <person name="Yao Z."/>
            <person name="Shen Y."/>
            <person name="Jin Q."/>
        </authorList>
    </citation>
    <scope>NUCLEOTIDE SEQUENCE [LARGE SCALE GENOMIC DNA]</scope>
    <source>
        <strain>8401</strain>
    </source>
</reference>
<keyword id="KW-0067">ATP-binding</keyword>
<keyword id="KW-0997">Cell inner membrane</keyword>
<keyword id="KW-1003">Cell membrane</keyword>
<keyword id="KW-0472">Membrane</keyword>
<keyword id="KW-0547">Nucleotide-binding</keyword>
<keyword id="KW-1278">Translocase</keyword>
<keyword id="KW-0813">Transport</keyword>
<name>BTUD_SHIF8</name>